<gene>
    <name evidence="1" type="primary">lepA</name>
    <name type="ordered locus">Swoo_1241</name>
</gene>
<keyword id="KW-0997">Cell inner membrane</keyword>
<keyword id="KW-1003">Cell membrane</keyword>
<keyword id="KW-0342">GTP-binding</keyword>
<keyword id="KW-0378">Hydrolase</keyword>
<keyword id="KW-0472">Membrane</keyword>
<keyword id="KW-0547">Nucleotide-binding</keyword>
<keyword id="KW-0648">Protein biosynthesis</keyword>
<keyword id="KW-1185">Reference proteome</keyword>
<reference key="1">
    <citation type="submission" date="2008-02" db="EMBL/GenBank/DDBJ databases">
        <title>Complete sequence of Shewanella woodyi ATCC 51908.</title>
        <authorList>
            <consortium name="US DOE Joint Genome Institute"/>
            <person name="Copeland A."/>
            <person name="Lucas S."/>
            <person name="Lapidus A."/>
            <person name="Glavina del Rio T."/>
            <person name="Dalin E."/>
            <person name="Tice H."/>
            <person name="Bruce D."/>
            <person name="Goodwin L."/>
            <person name="Pitluck S."/>
            <person name="Sims D."/>
            <person name="Brettin T."/>
            <person name="Detter J.C."/>
            <person name="Han C."/>
            <person name="Kuske C.R."/>
            <person name="Schmutz J."/>
            <person name="Larimer F."/>
            <person name="Land M."/>
            <person name="Hauser L."/>
            <person name="Kyrpides N."/>
            <person name="Lykidis A."/>
            <person name="Zhao J.-S."/>
            <person name="Richardson P."/>
        </authorList>
    </citation>
    <scope>NUCLEOTIDE SEQUENCE [LARGE SCALE GENOMIC DNA]</scope>
    <source>
        <strain>ATCC 51908 / MS32</strain>
    </source>
</reference>
<evidence type="ECO:0000255" key="1">
    <source>
        <dbReference type="HAMAP-Rule" id="MF_00071"/>
    </source>
</evidence>
<feature type="chain" id="PRO_1000092446" description="Elongation factor 4">
    <location>
        <begin position="1"/>
        <end position="596"/>
    </location>
</feature>
<feature type="domain" description="tr-type G">
    <location>
        <begin position="2"/>
        <end position="184"/>
    </location>
</feature>
<feature type="binding site" evidence="1">
    <location>
        <begin position="14"/>
        <end position="19"/>
    </location>
    <ligand>
        <name>GTP</name>
        <dbReference type="ChEBI" id="CHEBI:37565"/>
    </ligand>
</feature>
<feature type="binding site" evidence="1">
    <location>
        <begin position="131"/>
        <end position="134"/>
    </location>
    <ligand>
        <name>GTP</name>
        <dbReference type="ChEBI" id="CHEBI:37565"/>
    </ligand>
</feature>
<name>LEPA_SHEWM</name>
<comment type="function">
    <text evidence="1">Required for accurate and efficient protein synthesis under certain stress conditions. May act as a fidelity factor of the translation reaction, by catalyzing a one-codon backward translocation of tRNAs on improperly translocated ribosomes. Back-translocation proceeds from a post-translocation (POST) complex to a pre-translocation (PRE) complex, thus giving elongation factor G a second chance to translocate the tRNAs correctly. Binds to ribosomes in a GTP-dependent manner.</text>
</comment>
<comment type="catalytic activity">
    <reaction evidence="1">
        <text>GTP + H2O = GDP + phosphate + H(+)</text>
        <dbReference type="Rhea" id="RHEA:19669"/>
        <dbReference type="ChEBI" id="CHEBI:15377"/>
        <dbReference type="ChEBI" id="CHEBI:15378"/>
        <dbReference type="ChEBI" id="CHEBI:37565"/>
        <dbReference type="ChEBI" id="CHEBI:43474"/>
        <dbReference type="ChEBI" id="CHEBI:58189"/>
        <dbReference type="EC" id="3.6.5.n1"/>
    </reaction>
</comment>
<comment type="subcellular location">
    <subcellularLocation>
        <location evidence="1">Cell inner membrane</location>
        <topology evidence="1">Peripheral membrane protein</topology>
        <orientation evidence="1">Cytoplasmic side</orientation>
    </subcellularLocation>
</comment>
<comment type="similarity">
    <text evidence="1">Belongs to the TRAFAC class translation factor GTPase superfamily. Classic translation factor GTPase family. LepA subfamily.</text>
</comment>
<sequence>MKHIRNFSIIAHIDHGKSTLSDRLIQECGGLSDREMAAQVLDSMDIERERGITIKAQSVTLDYKALDGETYQLNFIDTPGHVDFSYEVSRSLAACEGALLVVDAGQGVEAQTLANCYTALEMDMDVVPVLNKIDLPQADPERVADEIEDIVGIEAADAVRCSAKTGIGIKDVLEVIVAQIPPPEGDTEGPLQALIIDSWFDSYLGVVSLVRIKNGILKKGDKFKVMSTGQTYNADRVGIFTPKQTDTAELKTGEVGFVIAGIKEIHGAPVGDTLTHAKHGAEKPLGGFKKVKPQVYAGVFPISTDDYESFRDALNKLSLNDASLFFEPETSSALGFGFRIGFLGLLHMEIIQERLEREYNLDLITTAPTVVYEIVKTSGDTIYVDNPSDLPAINNIAEMREPIVETNILVPKDYLGNVITLCVEKRGVQKNMVYHGNQVAITYELPMAEVVMDFFDRLKSTSRGYASLEYNFVRFEPADMVRLDILINGDRVDALAMIIHKGLIRTKGLALVNKMKELIPRQMFDIAVQAAVGSQIIARSSIKAMRKDVTAKCYGGDVSRKKKLLNKQKEGKKRMKSVGNVEVPQEAFLAVLKLND</sequence>
<protein>
    <recommendedName>
        <fullName evidence="1">Elongation factor 4</fullName>
        <shortName evidence="1">EF-4</shortName>
        <ecNumber evidence="1">3.6.5.n1</ecNumber>
    </recommendedName>
    <alternativeName>
        <fullName evidence="1">Ribosomal back-translocase LepA</fullName>
    </alternativeName>
</protein>
<proteinExistence type="inferred from homology"/>
<dbReference type="EC" id="3.6.5.n1" evidence="1"/>
<dbReference type="EMBL" id="CP000961">
    <property type="protein sequence ID" value="ACA85533.1"/>
    <property type="molecule type" value="Genomic_DNA"/>
</dbReference>
<dbReference type="RefSeq" id="WP_012323879.1">
    <property type="nucleotide sequence ID" value="NC_010506.1"/>
</dbReference>
<dbReference type="SMR" id="B1KI55"/>
<dbReference type="STRING" id="392500.Swoo_1241"/>
<dbReference type="KEGG" id="swd:Swoo_1241"/>
<dbReference type="eggNOG" id="COG0481">
    <property type="taxonomic scope" value="Bacteria"/>
</dbReference>
<dbReference type="HOGENOM" id="CLU_009995_3_3_6"/>
<dbReference type="Proteomes" id="UP000002168">
    <property type="component" value="Chromosome"/>
</dbReference>
<dbReference type="GO" id="GO:0005886">
    <property type="term" value="C:plasma membrane"/>
    <property type="evidence" value="ECO:0007669"/>
    <property type="project" value="UniProtKB-SubCell"/>
</dbReference>
<dbReference type="GO" id="GO:0005525">
    <property type="term" value="F:GTP binding"/>
    <property type="evidence" value="ECO:0007669"/>
    <property type="project" value="UniProtKB-UniRule"/>
</dbReference>
<dbReference type="GO" id="GO:0003924">
    <property type="term" value="F:GTPase activity"/>
    <property type="evidence" value="ECO:0007669"/>
    <property type="project" value="UniProtKB-UniRule"/>
</dbReference>
<dbReference type="GO" id="GO:0097216">
    <property type="term" value="F:guanosine tetraphosphate binding"/>
    <property type="evidence" value="ECO:0007669"/>
    <property type="project" value="UniProtKB-ARBA"/>
</dbReference>
<dbReference type="GO" id="GO:0043022">
    <property type="term" value="F:ribosome binding"/>
    <property type="evidence" value="ECO:0007669"/>
    <property type="project" value="UniProtKB-UniRule"/>
</dbReference>
<dbReference type="GO" id="GO:0003746">
    <property type="term" value="F:translation elongation factor activity"/>
    <property type="evidence" value="ECO:0007669"/>
    <property type="project" value="UniProtKB-UniRule"/>
</dbReference>
<dbReference type="GO" id="GO:0045727">
    <property type="term" value="P:positive regulation of translation"/>
    <property type="evidence" value="ECO:0007669"/>
    <property type="project" value="UniProtKB-UniRule"/>
</dbReference>
<dbReference type="CDD" id="cd03699">
    <property type="entry name" value="EF4_II"/>
    <property type="match status" value="1"/>
</dbReference>
<dbReference type="CDD" id="cd16260">
    <property type="entry name" value="EF4_III"/>
    <property type="match status" value="1"/>
</dbReference>
<dbReference type="CDD" id="cd01890">
    <property type="entry name" value="LepA"/>
    <property type="match status" value="1"/>
</dbReference>
<dbReference type="CDD" id="cd03709">
    <property type="entry name" value="lepA_C"/>
    <property type="match status" value="1"/>
</dbReference>
<dbReference type="FunFam" id="3.40.50.300:FF:000078">
    <property type="entry name" value="Elongation factor 4"/>
    <property type="match status" value="1"/>
</dbReference>
<dbReference type="FunFam" id="2.40.30.10:FF:000015">
    <property type="entry name" value="Translation factor GUF1, mitochondrial"/>
    <property type="match status" value="1"/>
</dbReference>
<dbReference type="FunFam" id="3.30.70.240:FF:000007">
    <property type="entry name" value="Translation factor GUF1, mitochondrial"/>
    <property type="match status" value="1"/>
</dbReference>
<dbReference type="FunFam" id="3.30.70.2570:FF:000001">
    <property type="entry name" value="Translation factor GUF1, mitochondrial"/>
    <property type="match status" value="1"/>
</dbReference>
<dbReference type="FunFam" id="3.30.70.870:FF:000004">
    <property type="entry name" value="Translation factor GUF1, mitochondrial"/>
    <property type="match status" value="1"/>
</dbReference>
<dbReference type="Gene3D" id="3.30.70.240">
    <property type="match status" value="1"/>
</dbReference>
<dbReference type="Gene3D" id="3.30.70.2570">
    <property type="entry name" value="Elongation factor 4, C-terminal domain"/>
    <property type="match status" value="1"/>
</dbReference>
<dbReference type="Gene3D" id="3.30.70.870">
    <property type="entry name" value="Elongation Factor G (Translational Gtpase), domain 3"/>
    <property type="match status" value="1"/>
</dbReference>
<dbReference type="Gene3D" id="3.40.50.300">
    <property type="entry name" value="P-loop containing nucleotide triphosphate hydrolases"/>
    <property type="match status" value="1"/>
</dbReference>
<dbReference type="Gene3D" id="2.40.30.10">
    <property type="entry name" value="Translation factors"/>
    <property type="match status" value="1"/>
</dbReference>
<dbReference type="HAMAP" id="MF_00071">
    <property type="entry name" value="LepA"/>
    <property type="match status" value="1"/>
</dbReference>
<dbReference type="InterPro" id="IPR006297">
    <property type="entry name" value="EF-4"/>
</dbReference>
<dbReference type="InterPro" id="IPR035647">
    <property type="entry name" value="EFG_III/V"/>
</dbReference>
<dbReference type="InterPro" id="IPR000640">
    <property type="entry name" value="EFG_V-like"/>
</dbReference>
<dbReference type="InterPro" id="IPR004161">
    <property type="entry name" value="EFTu-like_2"/>
</dbReference>
<dbReference type="InterPro" id="IPR031157">
    <property type="entry name" value="G_TR_CS"/>
</dbReference>
<dbReference type="InterPro" id="IPR038363">
    <property type="entry name" value="LepA_C_sf"/>
</dbReference>
<dbReference type="InterPro" id="IPR013842">
    <property type="entry name" value="LepA_CTD"/>
</dbReference>
<dbReference type="InterPro" id="IPR035654">
    <property type="entry name" value="LepA_IV"/>
</dbReference>
<dbReference type="InterPro" id="IPR027417">
    <property type="entry name" value="P-loop_NTPase"/>
</dbReference>
<dbReference type="InterPro" id="IPR005225">
    <property type="entry name" value="Small_GTP-bd"/>
</dbReference>
<dbReference type="InterPro" id="IPR000795">
    <property type="entry name" value="T_Tr_GTP-bd_dom"/>
</dbReference>
<dbReference type="NCBIfam" id="TIGR01393">
    <property type="entry name" value="lepA"/>
    <property type="match status" value="1"/>
</dbReference>
<dbReference type="NCBIfam" id="TIGR00231">
    <property type="entry name" value="small_GTP"/>
    <property type="match status" value="1"/>
</dbReference>
<dbReference type="PANTHER" id="PTHR43512:SF4">
    <property type="entry name" value="TRANSLATION FACTOR GUF1 HOMOLOG, CHLOROPLASTIC"/>
    <property type="match status" value="1"/>
</dbReference>
<dbReference type="PANTHER" id="PTHR43512">
    <property type="entry name" value="TRANSLATION FACTOR GUF1-RELATED"/>
    <property type="match status" value="1"/>
</dbReference>
<dbReference type="Pfam" id="PF00679">
    <property type="entry name" value="EFG_C"/>
    <property type="match status" value="1"/>
</dbReference>
<dbReference type="Pfam" id="PF00009">
    <property type="entry name" value="GTP_EFTU"/>
    <property type="match status" value="1"/>
</dbReference>
<dbReference type="Pfam" id="PF03144">
    <property type="entry name" value="GTP_EFTU_D2"/>
    <property type="match status" value="1"/>
</dbReference>
<dbReference type="Pfam" id="PF06421">
    <property type="entry name" value="LepA_C"/>
    <property type="match status" value="1"/>
</dbReference>
<dbReference type="PRINTS" id="PR00315">
    <property type="entry name" value="ELONGATNFCT"/>
</dbReference>
<dbReference type="SMART" id="SM00838">
    <property type="entry name" value="EFG_C"/>
    <property type="match status" value="1"/>
</dbReference>
<dbReference type="SUPFAM" id="SSF54980">
    <property type="entry name" value="EF-G C-terminal domain-like"/>
    <property type="match status" value="2"/>
</dbReference>
<dbReference type="SUPFAM" id="SSF52540">
    <property type="entry name" value="P-loop containing nucleoside triphosphate hydrolases"/>
    <property type="match status" value="1"/>
</dbReference>
<dbReference type="PROSITE" id="PS00301">
    <property type="entry name" value="G_TR_1"/>
    <property type="match status" value="1"/>
</dbReference>
<dbReference type="PROSITE" id="PS51722">
    <property type="entry name" value="G_TR_2"/>
    <property type="match status" value="1"/>
</dbReference>
<organism>
    <name type="scientific">Shewanella woodyi (strain ATCC 51908 / MS32)</name>
    <dbReference type="NCBI Taxonomy" id="392500"/>
    <lineage>
        <taxon>Bacteria</taxon>
        <taxon>Pseudomonadati</taxon>
        <taxon>Pseudomonadota</taxon>
        <taxon>Gammaproteobacteria</taxon>
        <taxon>Alteromonadales</taxon>
        <taxon>Shewanellaceae</taxon>
        <taxon>Shewanella</taxon>
    </lineage>
</organism>
<accession>B1KI55</accession>